<reference key="1">
    <citation type="journal article" date="2002" name="Toxicon">
        <title>Novel insecticidal toxins from the venom of the spider Segestria florentina.</title>
        <authorList>
            <person name="Lipkin A."/>
            <person name="Kozlov S."/>
            <person name="Nosyreva E."/>
            <person name="Blake A."/>
            <person name="Windass J.D."/>
            <person name="Grishin E."/>
        </authorList>
    </citation>
    <scope>NUCLEOTIDE SEQUENCE [MRNA]</scope>
    <source>
        <tissue>Venom gland</tissue>
    </source>
</reference>
<name>SFI6_SEGFL</name>
<organism>
    <name type="scientific">Segestria florentina</name>
    <name type="common">Tube-web spider</name>
    <name type="synonym">Segestria gracilis</name>
    <dbReference type="NCBI Taxonomy" id="31925"/>
    <lineage>
        <taxon>Eukaryota</taxon>
        <taxon>Metazoa</taxon>
        <taxon>Ecdysozoa</taxon>
        <taxon>Arthropoda</taxon>
        <taxon>Chelicerata</taxon>
        <taxon>Arachnida</taxon>
        <taxon>Araneae</taxon>
        <taxon>Araneomorphae</taxon>
        <taxon>Haplogynae</taxon>
        <taxon>Dysderoidea</taxon>
        <taxon>Segestriidae</taxon>
        <taxon>Segestria</taxon>
    </lineage>
</organism>
<comment type="function">
    <text evidence="1">Insecticidal toxin. It inhibits insect voltage-gated sodium channels (Nav) by partially blocking the channel pore in DUM neurons from the American cockroach, not by acting as a gating modifier. The inhibition is only partially reversible after prolonged washout. In vivo, the toxin causes flaccid paralysis followed by death when injected into Heliothis virescens larvae. It also causes uncoordinated movements followed by full paralysis to sheep blowflies (Lucilia cuprina). When the toxin is fused to snowdrop lectin, it is orally active against larvae of the tomato moth (Laconobia oleracea), the rice brown planthopper (Nilaparvata lugens), and the peach-potato aphid (Myzus persicae).</text>
</comment>
<comment type="subcellular location">
    <subcellularLocation>
        <location evidence="1">Secreted</location>
    </subcellularLocation>
</comment>
<comment type="tissue specificity">
    <text evidence="4">Expressed by the venom gland.</text>
</comment>
<comment type="domain">
    <text evidence="1">The presence of a 'disulfide through disulfide knot' structurally defines this protein as a knottin.</text>
</comment>
<comment type="similarity">
    <text evidence="3">Belongs to the neurotoxin 16 (SFI) family.</text>
</comment>
<accession>P61100</accession>
<evidence type="ECO:0000250" key="1">
    <source>
        <dbReference type="UniProtKB" id="P61095"/>
    </source>
</evidence>
<evidence type="ECO:0000303" key="2">
    <source>
    </source>
</evidence>
<evidence type="ECO:0000305" key="3"/>
<evidence type="ECO:0000305" key="4">
    <source>
    </source>
</evidence>
<keyword id="KW-1015">Disulfide bond</keyword>
<keyword id="KW-0960">Knottin</keyword>
<keyword id="KW-0964">Secreted</keyword>
<keyword id="KW-0800">Toxin</keyword>
<protein>
    <recommendedName>
        <fullName evidence="3">Mu-segestritoxin-Sf1f</fullName>
        <shortName evidence="3">Mu-SGTX-Sf1f</shortName>
    </recommendedName>
    <alternativeName>
        <fullName evidence="2">Toxin SFI6</fullName>
    </alternativeName>
</protein>
<dbReference type="SMR" id="P61100"/>
<dbReference type="ArachnoServer" id="AS000121">
    <property type="toxin name" value="mu-segestritoxin-Sf1f"/>
</dbReference>
<dbReference type="GO" id="GO:0005576">
    <property type="term" value="C:extracellular region"/>
    <property type="evidence" value="ECO:0007669"/>
    <property type="project" value="UniProtKB-SubCell"/>
</dbReference>
<dbReference type="GO" id="GO:0090729">
    <property type="term" value="F:toxin activity"/>
    <property type="evidence" value="ECO:0007669"/>
    <property type="project" value="UniProtKB-KW"/>
</dbReference>
<dbReference type="Gene3D" id="4.10.40.60">
    <property type="match status" value="1"/>
</dbReference>
<dbReference type="InterPro" id="IPR053718">
    <property type="entry name" value="Insecticidal_knottin-like_sf"/>
</dbReference>
<dbReference type="InterPro" id="IPR012633">
    <property type="entry name" value="Toxin_28"/>
</dbReference>
<dbReference type="Pfam" id="PF08115">
    <property type="entry name" value="Toxin_28"/>
    <property type="match status" value="1"/>
</dbReference>
<proteinExistence type="inferred from homology"/>
<feature type="chain" id="PRO_0000087621" description="Mu-segestritoxin-Sf1f" evidence="4">
    <location>
        <begin position="1"/>
        <end position="46"/>
    </location>
</feature>
<feature type="region of interest" description="Keys region for toxin activity" evidence="1">
    <location>
        <begin position="31"/>
        <end position="33"/>
    </location>
</feature>
<feature type="disulfide bond" evidence="1">
    <location>
        <begin position="3"/>
        <end position="19"/>
    </location>
</feature>
<feature type="disulfide bond" evidence="1">
    <location>
        <begin position="10"/>
        <end position="22"/>
    </location>
</feature>
<feature type="disulfide bond" evidence="1">
    <location>
        <begin position="18"/>
        <end position="42"/>
    </location>
</feature>
<feature type="disulfide bond" evidence="1">
    <location>
        <begin position="24"/>
        <end position="40"/>
    </location>
</feature>
<sequence>KECMTDETVCYIHNHNDCCGSCLCLNGPIARPWEMMVGNCKCGPKA</sequence>